<feature type="chain" id="PRO_0000164893" description="Major spike protein G">
    <location>
        <begin position="1"/>
        <end position="177"/>
    </location>
</feature>
<feature type="sequence conflict" description="In Ref. 2; AAA32328." evidence="2" ref="2">
    <original>A</original>
    <variation>T</variation>
    <location>
        <position position="27"/>
    </location>
</feature>
<feature type="strand" evidence="3">
    <location>
        <begin position="19"/>
        <end position="22"/>
    </location>
</feature>
<feature type="strand" evidence="3">
    <location>
        <begin position="29"/>
        <end position="32"/>
    </location>
</feature>
<feature type="strand" evidence="3">
    <location>
        <begin position="36"/>
        <end position="41"/>
    </location>
</feature>
<feature type="strand" evidence="3">
    <location>
        <begin position="44"/>
        <end position="47"/>
    </location>
</feature>
<feature type="strand" evidence="3">
    <location>
        <begin position="50"/>
        <end position="53"/>
    </location>
</feature>
<feature type="strand" evidence="3">
    <location>
        <begin position="55"/>
        <end position="61"/>
    </location>
</feature>
<feature type="strand" evidence="3">
    <location>
        <begin position="69"/>
        <end position="81"/>
    </location>
</feature>
<feature type="strand" evidence="3">
    <location>
        <begin position="87"/>
        <end position="96"/>
    </location>
</feature>
<feature type="strand" evidence="3">
    <location>
        <begin position="109"/>
        <end position="111"/>
    </location>
</feature>
<feature type="strand" evidence="3">
    <location>
        <begin position="115"/>
        <end position="117"/>
    </location>
</feature>
<feature type="strand" evidence="3">
    <location>
        <begin position="122"/>
        <end position="124"/>
    </location>
</feature>
<feature type="strand" evidence="3">
    <location>
        <begin position="126"/>
        <end position="131"/>
    </location>
</feature>
<feature type="strand" evidence="3">
    <location>
        <begin position="139"/>
        <end position="148"/>
    </location>
</feature>
<feature type="strand" evidence="3">
    <location>
        <begin position="150"/>
        <end position="152"/>
    </location>
</feature>
<feature type="strand" evidence="3">
    <location>
        <begin position="154"/>
        <end position="157"/>
    </location>
</feature>
<feature type="strand" evidence="3">
    <location>
        <begin position="159"/>
        <end position="168"/>
    </location>
</feature>
<sequence length="177" mass="18820">MFQKFISKHNAPINSTQLAATKTPAVAAPVLSVPNLSRSTILINATTTAVTTHSGLCHVVRIDETNPTNHHALSIAGSLSNVPADMIAFAIRFEVADGVVPTAVPALYDVYPIETFNNGKAISFKDAVTIDSHPRTVGNDVYAGIMLWSNAWTASTISGVLSVNQVNREATVLQPLK</sequence>
<name>G_BPG4</name>
<evidence type="ECO:0000250" key="1"/>
<evidence type="ECO:0000305" key="2"/>
<evidence type="ECO:0007829" key="3">
    <source>
        <dbReference type="PDB" id="1GFF"/>
    </source>
</evidence>
<proteinExistence type="evidence at protein level"/>
<accession>P03644</accession>
<reference key="1">
    <citation type="journal article" date="1978" name="Nature">
        <title>Nucleotide sequence of bacteriophage G4 DNA.</title>
        <authorList>
            <person name="Godson G.N."/>
            <person name="Barrell B.G."/>
            <person name="Staden R."/>
            <person name="Fiddes J.C."/>
        </authorList>
    </citation>
    <scope>NUCLEOTIDE SEQUENCE [GENOMIC DNA]</scope>
</reference>
<reference key="2">
    <citation type="journal article" date="1978" name="Proc. Natl. Acad. Sci. U.S.A.">
        <title>Site-specific initiation of a DNA fragment: nucleotide sequence of the bacteriophage G4 negative-strand initiation site.</title>
        <authorList>
            <person name="Sims J."/>
            <person name="Dressler D."/>
        </authorList>
    </citation>
    <scope>NUCLEOTIDE SEQUENCE [GENOMIC DNA] OF 1-81</scope>
</reference>
<reference key="3">
    <citation type="journal article" date="1996" name="J. Mol. Biol.">
        <title>Atomic structure of the degraded procapsid particle of the bacteriophage G4: induced structural changes in the presence of calcium ions and functional implications.</title>
        <authorList>
            <person name="McKenna R."/>
            <person name="Bowman B.R."/>
            <person name="Iiag L.L."/>
            <person name="Rossmann M.G."/>
            <person name="Fane B.A."/>
        </authorList>
    </citation>
    <scope>X-RAY CRYSTALLOGRAPHY (3.0 ANGSTROMS)</scope>
</reference>
<dbReference type="EMBL" id="V00657">
    <property type="protein sequence ID" value="CAA24020.1"/>
    <property type="molecule type" value="Genomic_DNA"/>
</dbReference>
<dbReference type="EMBL" id="M25080">
    <property type="protein sequence ID" value="AAA32328.1"/>
    <property type="molecule type" value="Genomic_DNA"/>
</dbReference>
<dbReference type="PIR" id="A04252">
    <property type="entry name" value="ZGBPG4"/>
</dbReference>
<dbReference type="PDB" id="1GFF">
    <property type="method" value="X-ray"/>
    <property type="resolution" value="3.00 A"/>
    <property type="chains" value="2=1-177"/>
</dbReference>
<dbReference type="PDBsum" id="1GFF"/>
<dbReference type="SMR" id="P03644"/>
<dbReference type="DIP" id="DIP-6178N"/>
<dbReference type="MINT" id="P03644"/>
<dbReference type="OrthoDB" id="23501at10239"/>
<dbReference type="EvolutionaryTrace" id="P03644"/>
<dbReference type="Proteomes" id="UP000002140">
    <property type="component" value="Segment"/>
</dbReference>
<dbReference type="GO" id="GO:0019028">
    <property type="term" value="C:viral capsid"/>
    <property type="evidence" value="ECO:0007669"/>
    <property type="project" value="UniProtKB-KW"/>
</dbReference>
<dbReference type="GO" id="GO:0046718">
    <property type="term" value="P:symbiont entry into host cell"/>
    <property type="evidence" value="ECO:0007669"/>
    <property type="project" value="UniProtKB-KW"/>
</dbReference>
<dbReference type="GO" id="GO:0044003">
    <property type="term" value="P:symbiont-mediated perturbation of host process"/>
    <property type="evidence" value="ECO:0007669"/>
    <property type="project" value="InterPro"/>
</dbReference>
<dbReference type="GO" id="GO:0019062">
    <property type="term" value="P:virion attachment to host cell"/>
    <property type="evidence" value="ECO:0007669"/>
    <property type="project" value="UniProtKB-KW"/>
</dbReference>
<dbReference type="Gene3D" id="2.60.120.20">
    <property type="match status" value="1"/>
</dbReference>
<dbReference type="InterPro" id="IPR016184">
    <property type="entry name" value="Capsid/spike_ssDNA_virus"/>
</dbReference>
<dbReference type="InterPro" id="IPR003515">
    <property type="entry name" value="Spike_G"/>
</dbReference>
<dbReference type="InterPro" id="IPR029053">
    <property type="entry name" value="Viral_coat"/>
</dbReference>
<dbReference type="Pfam" id="PF02306">
    <property type="entry name" value="Phage_G"/>
    <property type="match status" value="1"/>
</dbReference>
<dbReference type="PIRSF" id="PIRSF004159">
    <property type="entry name" value="Spike_G"/>
    <property type="match status" value="1"/>
</dbReference>
<dbReference type="SUPFAM" id="SSF88645">
    <property type="entry name" value="ssDNA viruses"/>
    <property type="match status" value="1"/>
</dbReference>
<organism>
    <name type="scientific">Escherichia phage G4</name>
    <name type="common">Bacteriophage G4</name>
    <dbReference type="NCBI Taxonomy" id="10843"/>
    <lineage>
        <taxon>Viruses</taxon>
        <taxon>Monodnaviria</taxon>
        <taxon>Sangervirae</taxon>
        <taxon>Phixviricota</taxon>
        <taxon>Malgrandaviricetes</taxon>
        <taxon>Petitvirales</taxon>
        <taxon>Microviridae</taxon>
        <taxon>Bullavirinae</taxon>
        <taxon>Gequatrovirus</taxon>
        <taxon>Gequatrovirus G4</taxon>
    </lineage>
</organism>
<comment type="function">
    <text evidence="1">Attaches the circulating virion to the bacterial lipopolysaccharides which serve as receptor for the virus. Determines the phage host-range. Probably triggers with protein H the injection of the phage DNA into the host cytoplasm upon conformational changes induced by the interaction with host lipopolysaccharides (By similarity).</text>
</comment>
<comment type="subunit">
    <text>The virion is composed of 60 copies each of the F, G, and J proteins, and 12 copies of the H protein. There are 12 spikes which are each composed of 5 G and one H proteins.</text>
</comment>
<comment type="subcellular location">
    <subcellularLocation>
        <location evidence="2">Virion</location>
    </subcellularLocation>
</comment>
<comment type="similarity">
    <text evidence="2">Belongs to the microvirus G protein family.</text>
</comment>
<organismHost>
    <name type="scientific">Escherichia coli</name>
    <dbReference type="NCBI Taxonomy" id="562"/>
</organismHost>
<protein>
    <recommendedName>
        <fullName>Major spike protein G</fullName>
    </recommendedName>
    <alternativeName>
        <fullName>G protein</fullName>
    </alternativeName>
    <alternativeName>
        <fullName>GPG</fullName>
    </alternativeName>
</protein>
<keyword id="KW-0002">3D-structure</keyword>
<keyword id="KW-0167">Capsid protein</keyword>
<keyword id="KW-0945">Host-virus interaction</keyword>
<keyword id="KW-1185">Reference proteome</keyword>
<keyword id="KW-1161">Viral attachment to host cell</keyword>
<keyword id="KW-1171">Viral genome ejection through host cell envelope</keyword>
<keyword id="KW-1162">Viral penetration into host cytoplasm</keyword>
<keyword id="KW-0946">Virion</keyword>
<keyword id="KW-1160">Virus entry into host cell</keyword>
<gene>
    <name type="primary">G</name>
</gene>